<evidence type="ECO:0000255" key="1">
    <source>
        <dbReference type="HAMAP-Rule" id="MF_00337"/>
    </source>
</evidence>
<gene>
    <name evidence="1" type="primary">xseB</name>
    <name type="ordered locus">SAR1600</name>
</gene>
<keyword id="KW-0963">Cytoplasm</keyword>
<keyword id="KW-0269">Exonuclease</keyword>
<keyword id="KW-0378">Hydrolase</keyword>
<keyword id="KW-0540">Nuclease</keyword>
<organism>
    <name type="scientific">Staphylococcus aureus (strain MRSA252)</name>
    <dbReference type="NCBI Taxonomy" id="282458"/>
    <lineage>
        <taxon>Bacteria</taxon>
        <taxon>Bacillati</taxon>
        <taxon>Bacillota</taxon>
        <taxon>Bacilli</taxon>
        <taxon>Bacillales</taxon>
        <taxon>Staphylococcaceae</taxon>
        <taxon>Staphylococcus</taxon>
    </lineage>
</organism>
<comment type="function">
    <text evidence="1">Bidirectionally degrades single-stranded DNA into large acid-insoluble oligonucleotides, which are then degraded further into small acid-soluble oligonucleotides.</text>
</comment>
<comment type="catalytic activity">
    <reaction evidence="1">
        <text>Exonucleolytic cleavage in either 5'- to 3'- or 3'- to 5'-direction to yield nucleoside 5'-phosphates.</text>
        <dbReference type="EC" id="3.1.11.6"/>
    </reaction>
</comment>
<comment type="subunit">
    <text evidence="1">Heterooligomer composed of large and small subunits.</text>
</comment>
<comment type="subcellular location">
    <subcellularLocation>
        <location evidence="1">Cytoplasm</location>
    </subcellularLocation>
</comment>
<comment type="similarity">
    <text evidence="1">Belongs to the XseB family.</text>
</comment>
<reference key="1">
    <citation type="journal article" date="2004" name="Proc. Natl. Acad. Sci. U.S.A.">
        <title>Complete genomes of two clinical Staphylococcus aureus strains: evidence for the rapid evolution of virulence and drug resistance.</title>
        <authorList>
            <person name="Holden M.T.G."/>
            <person name="Feil E.J."/>
            <person name="Lindsay J.A."/>
            <person name="Peacock S.J."/>
            <person name="Day N.P.J."/>
            <person name="Enright M.C."/>
            <person name="Foster T.J."/>
            <person name="Moore C.E."/>
            <person name="Hurst L."/>
            <person name="Atkin R."/>
            <person name="Barron A."/>
            <person name="Bason N."/>
            <person name="Bentley S.D."/>
            <person name="Chillingworth C."/>
            <person name="Chillingworth T."/>
            <person name="Churcher C."/>
            <person name="Clark L."/>
            <person name="Corton C."/>
            <person name="Cronin A."/>
            <person name="Doggett J."/>
            <person name="Dowd L."/>
            <person name="Feltwell T."/>
            <person name="Hance Z."/>
            <person name="Harris B."/>
            <person name="Hauser H."/>
            <person name="Holroyd S."/>
            <person name="Jagels K."/>
            <person name="James K.D."/>
            <person name="Lennard N."/>
            <person name="Line A."/>
            <person name="Mayes R."/>
            <person name="Moule S."/>
            <person name="Mungall K."/>
            <person name="Ormond D."/>
            <person name="Quail M.A."/>
            <person name="Rabbinowitsch E."/>
            <person name="Rutherford K.M."/>
            <person name="Sanders M."/>
            <person name="Sharp S."/>
            <person name="Simmonds M."/>
            <person name="Stevens K."/>
            <person name="Whitehead S."/>
            <person name="Barrell B.G."/>
            <person name="Spratt B.G."/>
            <person name="Parkhill J."/>
        </authorList>
    </citation>
    <scope>NUCLEOTIDE SEQUENCE [LARGE SCALE GENOMIC DNA]</scope>
    <source>
        <strain>MRSA252</strain>
    </source>
</reference>
<proteinExistence type="inferred from homology"/>
<dbReference type="EC" id="3.1.11.6" evidence="1"/>
<dbReference type="EMBL" id="BX571856">
    <property type="protein sequence ID" value="CAG40595.1"/>
    <property type="molecule type" value="Genomic_DNA"/>
</dbReference>
<dbReference type="RefSeq" id="WP_000159866.1">
    <property type="nucleotide sequence ID" value="NC_002952.2"/>
</dbReference>
<dbReference type="SMR" id="Q6GGH6"/>
<dbReference type="KEGG" id="sar:SAR1600"/>
<dbReference type="HOGENOM" id="CLU_145918_3_2_9"/>
<dbReference type="Proteomes" id="UP000000596">
    <property type="component" value="Chromosome"/>
</dbReference>
<dbReference type="GO" id="GO:0005829">
    <property type="term" value="C:cytosol"/>
    <property type="evidence" value="ECO:0007669"/>
    <property type="project" value="TreeGrafter"/>
</dbReference>
<dbReference type="GO" id="GO:0009318">
    <property type="term" value="C:exodeoxyribonuclease VII complex"/>
    <property type="evidence" value="ECO:0007669"/>
    <property type="project" value="InterPro"/>
</dbReference>
<dbReference type="GO" id="GO:0008855">
    <property type="term" value="F:exodeoxyribonuclease VII activity"/>
    <property type="evidence" value="ECO:0007669"/>
    <property type="project" value="UniProtKB-UniRule"/>
</dbReference>
<dbReference type="GO" id="GO:0006308">
    <property type="term" value="P:DNA catabolic process"/>
    <property type="evidence" value="ECO:0007669"/>
    <property type="project" value="UniProtKB-UniRule"/>
</dbReference>
<dbReference type="FunFam" id="1.10.287.1040:FF:000006">
    <property type="entry name" value="Exodeoxyribonuclease 7 small subunit"/>
    <property type="match status" value="1"/>
</dbReference>
<dbReference type="Gene3D" id="1.10.287.1040">
    <property type="entry name" value="Exonuclease VII, small subunit"/>
    <property type="match status" value="1"/>
</dbReference>
<dbReference type="HAMAP" id="MF_00337">
    <property type="entry name" value="Exonuc_7_S"/>
    <property type="match status" value="1"/>
</dbReference>
<dbReference type="InterPro" id="IPR003761">
    <property type="entry name" value="Exonuc_VII_S"/>
</dbReference>
<dbReference type="InterPro" id="IPR037004">
    <property type="entry name" value="Exonuc_VII_ssu_sf"/>
</dbReference>
<dbReference type="NCBIfam" id="NF002140">
    <property type="entry name" value="PRK00977.1-4"/>
    <property type="match status" value="1"/>
</dbReference>
<dbReference type="NCBIfam" id="NF010671">
    <property type="entry name" value="PRK14068.1"/>
    <property type="match status" value="1"/>
</dbReference>
<dbReference type="NCBIfam" id="TIGR01280">
    <property type="entry name" value="xseB"/>
    <property type="match status" value="1"/>
</dbReference>
<dbReference type="PANTHER" id="PTHR34137">
    <property type="entry name" value="EXODEOXYRIBONUCLEASE 7 SMALL SUBUNIT"/>
    <property type="match status" value="1"/>
</dbReference>
<dbReference type="PANTHER" id="PTHR34137:SF1">
    <property type="entry name" value="EXODEOXYRIBONUCLEASE 7 SMALL SUBUNIT"/>
    <property type="match status" value="1"/>
</dbReference>
<dbReference type="Pfam" id="PF02609">
    <property type="entry name" value="Exonuc_VII_S"/>
    <property type="match status" value="1"/>
</dbReference>
<dbReference type="PIRSF" id="PIRSF006488">
    <property type="entry name" value="Exonuc_VII_S"/>
    <property type="match status" value="1"/>
</dbReference>
<dbReference type="SUPFAM" id="SSF116842">
    <property type="entry name" value="XseB-like"/>
    <property type="match status" value="1"/>
</dbReference>
<name>EX7S_STAAR</name>
<feature type="chain" id="PRO_0000207006" description="Exodeoxyribonuclease 7 small subunit">
    <location>
        <begin position="1"/>
        <end position="76"/>
    </location>
</feature>
<accession>Q6GGH6</accession>
<protein>
    <recommendedName>
        <fullName evidence="1">Exodeoxyribonuclease 7 small subunit</fullName>
        <ecNumber evidence="1">3.1.11.6</ecNumber>
    </recommendedName>
    <alternativeName>
        <fullName evidence="1">Exodeoxyribonuclease VII small subunit</fullName>
        <shortName evidence="1">Exonuclease VII small subunit</shortName>
    </alternativeName>
</protein>
<sequence length="76" mass="8788">MTKETQSFEEMMQELERIVQKLDNETVSLEESLDLYQRGMKLSAACDTTLKNAEKKVNDLIKEEAEDVKNDESTDE</sequence>